<name>FUMH_SCHPO</name>
<reference key="1">
    <citation type="journal article" date="2002" name="Nature">
        <title>The genome sequence of Schizosaccharomyces pombe.</title>
        <authorList>
            <person name="Wood V."/>
            <person name="Gwilliam R."/>
            <person name="Rajandream M.A."/>
            <person name="Lyne M.H."/>
            <person name="Lyne R."/>
            <person name="Stewart A."/>
            <person name="Sgouros J.G."/>
            <person name="Peat N."/>
            <person name="Hayles J."/>
            <person name="Baker S.G."/>
            <person name="Basham D."/>
            <person name="Bowman S."/>
            <person name="Brooks K."/>
            <person name="Brown D."/>
            <person name="Brown S."/>
            <person name="Chillingworth T."/>
            <person name="Churcher C.M."/>
            <person name="Collins M."/>
            <person name="Connor R."/>
            <person name="Cronin A."/>
            <person name="Davis P."/>
            <person name="Feltwell T."/>
            <person name="Fraser A."/>
            <person name="Gentles S."/>
            <person name="Goble A."/>
            <person name="Hamlin N."/>
            <person name="Harris D.E."/>
            <person name="Hidalgo J."/>
            <person name="Hodgson G."/>
            <person name="Holroyd S."/>
            <person name="Hornsby T."/>
            <person name="Howarth S."/>
            <person name="Huckle E.J."/>
            <person name="Hunt S."/>
            <person name="Jagels K."/>
            <person name="James K.D."/>
            <person name="Jones L."/>
            <person name="Jones M."/>
            <person name="Leather S."/>
            <person name="McDonald S."/>
            <person name="McLean J."/>
            <person name="Mooney P."/>
            <person name="Moule S."/>
            <person name="Mungall K.L."/>
            <person name="Murphy L.D."/>
            <person name="Niblett D."/>
            <person name="Odell C."/>
            <person name="Oliver K."/>
            <person name="O'Neil S."/>
            <person name="Pearson D."/>
            <person name="Quail M.A."/>
            <person name="Rabbinowitsch E."/>
            <person name="Rutherford K.M."/>
            <person name="Rutter S."/>
            <person name="Saunders D."/>
            <person name="Seeger K."/>
            <person name="Sharp S."/>
            <person name="Skelton J."/>
            <person name="Simmonds M.N."/>
            <person name="Squares R."/>
            <person name="Squares S."/>
            <person name="Stevens K."/>
            <person name="Taylor K."/>
            <person name="Taylor R.G."/>
            <person name="Tivey A."/>
            <person name="Walsh S.V."/>
            <person name="Warren T."/>
            <person name="Whitehead S."/>
            <person name="Woodward J.R."/>
            <person name="Volckaert G."/>
            <person name="Aert R."/>
            <person name="Robben J."/>
            <person name="Grymonprez B."/>
            <person name="Weltjens I."/>
            <person name="Vanstreels E."/>
            <person name="Rieger M."/>
            <person name="Schaefer M."/>
            <person name="Mueller-Auer S."/>
            <person name="Gabel C."/>
            <person name="Fuchs M."/>
            <person name="Duesterhoeft A."/>
            <person name="Fritzc C."/>
            <person name="Holzer E."/>
            <person name="Moestl D."/>
            <person name="Hilbert H."/>
            <person name="Borzym K."/>
            <person name="Langer I."/>
            <person name="Beck A."/>
            <person name="Lehrach H."/>
            <person name="Reinhardt R."/>
            <person name="Pohl T.M."/>
            <person name="Eger P."/>
            <person name="Zimmermann W."/>
            <person name="Wedler H."/>
            <person name="Wambutt R."/>
            <person name="Purnelle B."/>
            <person name="Goffeau A."/>
            <person name="Cadieu E."/>
            <person name="Dreano S."/>
            <person name="Gloux S."/>
            <person name="Lelaure V."/>
            <person name="Mottier S."/>
            <person name="Galibert F."/>
            <person name="Aves S.J."/>
            <person name="Xiang Z."/>
            <person name="Hunt C."/>
            <person name="Moore K."/>
            <person name="Hurst S.M."/>
            <person name="Lucas M."/>
            <person name="Rochet M."/>
            <person name="Gaillardin C."/>
            <person name="Tallada V.A."/>
            <person name="Garzon A."/>
            <person name="Thode G."/>
            <person name="Daga R.R."/>
            <person name="Cruzado L."/>
            <person name="Jimenez J."/>
            <person name="Sanchez M."/>
            <person name="del Rey F."/>
            <person name="Benito J."/>
            <person name="Dominguez A."/>
            <person name="Revuelta J.L."/>
            <person name="Moreno S."/>
            <person name="Armstrong J."/>
            <person name="Forsburg S.L."/>
            <person name="Cerutti L."/>
            <person name="Lowe T."/>
            <person name="McCombie W.R."/>
            <person name="Paulsen I."/>
            <person name="Potashkin J."/>
            <person name="Shpakovski G.V."/>
            <person name="Ussery D."/>
            <person name="Barrell B.G."/>
            <person name="Nurse P."/>
        </authorList>
    </citation>
    <scope>NUCLEOTIDE SEQUENCE [LARGE SCALE GENOMIC DNA]</scope>
    <source>
        <strain>972 / ATCC 24843</strain>
    </source>
</reference>
<organism>
    <name type="scientific">Schizosaccharomyces pombe (strain 972 / ATCC 24843)</name>
    <name type="common">Fission yeast</name>
    <dbReference type="NCBI Taxonomy" id="284812"/>
    <lineage>
        <taxon>Eukaryota</taxon>
        <taxon>Fungi</taxon>
        <taxon>Dikarya</taxon>
        <taxon>Ascomycota</taxon>
        <taxon>Taphrinomycotina</taxon>
        <taxon>Schizosaccharomycetes</taxon>
        <taxon>Schizosaccharomycetales</taxon>
        <taxon>Schizosaccharomycetaceae</taxon>
        <taxon>Schizosaccharomyces</taxon>
    </lineage>
</organism>
<comment type="function">
    <text evidence="3">Catalyzes the reversible stereospecific interconversion of fumarate to L-malate. In mitochondrion, catalyzes the hydration of fumarate to L-malate in the tricarboxylic acid (TCA) cycle to facilitate a transition step in the production of energy in the form of NADH. In cytoplasm and nucleus, involved in DNA repair in response to DNA damage: following DNA double-strand breaks (DSBs), translocates from the cytosol to the nucleus and promotes DNA repair by catalyzing the dehydration of L-malate to fumarate.</text>
</comment>
<comment type="catalytic activity">
    <reaction evidence="3">
        <text>(S)-malate = fumarate + H2O</text>
        <dbReference type="Rhea" id="RHEA:12460"/>
        <dbReference type="ChEBI" id="CHEBI:15377"/>
        <dbReference type="ChEBI" id="CHEBI:15589"/>
        <dbReference type="ChEBI" id="CHEBI:29806"/>
        <dbReference type="EC" id="4.2.1.2"/>
    </reaction>
</comment>
<comment type="pathway">
    <text evidence="3">Carbohydrate metabolism; tricarboxylic acid cycle; (S)-malate from fumarate: step 1/1.</text>
</comment>
<comment type="subunit">
    <text evidence="3">Homotetramer.</text>
</comment>
<comment type="subcellular location">
    <subcellularLocation>
        <location evidence="3">Mitochondrion matrix</location>
    </subcellularLocation>
    <subcellularLocation>
        <location evidence="3">Cytoplasm</location>
    </subcellularLocation>
    <subcellularLocation>
        <location evidence="3">Nucleus</location>
    </subcellularLocation>
    <text evidence="3">Translocates from the cytosol to the nucleus in response to DNA damage.</text>
</comment>
<comment type="miscellaneous">
    <text evidence="1">There are 2 substrate-binding sites: the catalytic A site, and the non-catalytic B site that may play a role in the transfer of substrate or product between the active site and the solvent. Alternatively, the B site may bind allosteric effectors (By similarity).</text>
</comment>
<comment type="similarity">
    <text evidence="6">Belongs to the class-II fumarase/aspartase family. Fumarase subfamily.</text>
</comment>
<gene>
    <name type="primary">fum1</name>
    <name type="ORF">SPCC18.18c</name>
    <name type="ORF">SPCC290.01c</name>
</gene>
<sequence>MASVAHISTAKAIFRAGGLPCRRLITPTLTGLPLKTHRMNSTTPTYHLIPKGGKHGEFRQESDTFGPIQVPAEKYWGAQTQRSLQNFRIGGEKERLPLPLVRAFGVLKRAAASVNREFGLDPKLADAIEQAAQEVIDGRLDDNFPLVVFQTGSGTQSNMNSNEVIANRAIEILGGTLGSKKPVHPNDHVNMSQSSNDTFPTVMHIASVLQIHTHLLPAMKHLHRALKGKEEEFKNIIKIGRTHMQDATPLSLGQEFSGYVTQVGYGIERINNALPRLCLLAQGGTAVGTGLNTFEGFDVKVAEKVSKLTNIEFKTAPNKFEALAAHDAIVEMSGALNVIACSLMKIANDIRQLGSGPRCGLGELILPANEPGSSIMPGKVNPTQCEALTMVCAQVMGNHATITVAGASGHCELNVFKPLLAKNILSSIRLLGDACESFTDHCVVGIEPNYEGIARHLRDSLMLVTALNPHIGYDNCAKIAKTALKNKSTLKHEFVTLGFGTPEQFDEWVRPELMISAKKV</sequence>
<protein>
    <recommendedName>
        <fullName>Fumarate hydratase, mitochondrial</fullName>
        <shortName>Fumarase</shortName>
        <ecNumber evidence="3">4.2.1.2</ecNumber>
    </recommendedName>
</protein>
<keyword id="KW-0963">Cytoplasm</keyword>
<keyword id="KW-0227">DNA damage</keyword>
<keyword id="KW-0234">DNA repair</keyword>
<keyword id="KW-0456">Lyase</keyword>
<keyword id="KW-0496">Mitochondrion</keyword>
<keyword id="KW-0539">Nucleus</keyword>
<keyword id="KW-1185">Reference proteome</keyword>
<keyword id="KW-0809">Transit peptide</keyword>
<keyword id="KW-0816">Tricarboxylic acid cycle</keyword>
<dbReference type="EC" id="4.2.1.2" evidence="3"/>
<dbReference type="EMBL" id="CU329672">
    <property type="protein sequence ID" value="CAA21432.3"/>
    <property type="molecule type" value="Genomic_DNA"/>
</dbReference>
<dbReference type="PIR" id="T41265">
    <property type="entry name" value="T41265"/>
</dbReference>
<dbReference type="RefSeq" id="NP_588397.3">
    <property type="nucleotide sequence ID" value="NM_001023388.3"/>
</dbReference>
<dbReference type="SMR" id="O94552"/>
<dbReference type="BioGRID" id="275911">
    <property type="interactions" value="2"/>
</dbReference>
<dbReference type="FunCoup" id="O94552">
    <property type="interactions" value="417"/>
</dbReference>
<dbReference type="STRING" id="284812.O94552"/>
<dbReference type="iPTMnet" id="O94552"/>
<dbReference type="SwissPalm" id="O94552"/>
<dbReference type="PaxDb" id="4896-SPCC18.18c.1"/>
<dbReference type="EnsemblFungi" id="SPCC18.18c.1">
    <property type="protein sequence ID" value="SPCC18.18c.1:pep"/>
    <property type="gene ID" value="SPCC18.18c"/>
</dbReference>
<dbReference type="GeneID" id="2539345"/>
<dbReference type="KEGG" id="spo:2539345"/>
<dbReference type="PomBase" id="SPCC18.18c">
    <property type="gene designation" value="fum1"/>
</dbReference>
<dbReference type="VEuPathDB" id="FungiDB:SPCC18.18c"/>
<dbReference type="eggNOG" id="KOG1317">
    <property type="taxonomic scope" value="Eukaryota"/>
</dbReference>
<dbReference type="HOGENOM" id="CLU_021594_4_1_1"/>
<dbReference type="InParanoid" id="O94552"/>
<dbReference type="OMA" id="AKWRAQT"/>
<dbReference type="PhylomeDB" id="O94552"/>
<dbReference type="Reactome" id="R-SPO-71403">
    <property type="pathway name" value="Citric acid cycle (TCA cycle)"/>
</dbReference>
<dbReference type="Reactome" id="R-SPO-9837999">
    <property type="pathway name" value="Mitochondrial protein degradation"/>
</dbReference>
<dbReference type="UniPathway" id="UPA00223">
    <property type="reaction ID" value="UER01007"/>
</dbReference>
<dbReference type="PRO" id="PR:O94552"/>
<dbReference type="Proteomes" id="UP000002485">
    <property type="component" value="Chromosome III"/>
</dbReference>
<dbReference type="GO" id="GO:0005829">
    <property type="term" value="C:cytosol"/>
    <property type="evidence" value="ECO:0007005"/>
    <property type="project" value="PomBase"/>
</dbReference>
<dbReference type="GO" id="GO:0005759">
    <property type="term" value="C:mitochondrial matrix"/>
    <property type="evidence" value="ECO:0007669"/>
    <property type="project" value="UniProtKB-SubCell"/>
</dbReference>
<dbReference type="GO" id="GO:0005739">
    <property type="term" value="C:mitochondrion"/>
    <property type="evidence" value="ECO:0000250"/>
    <property type="project" value="UniProtKB"/>
</dbReference>
<dbReference type="GO" id="GO:0005634">
    <property type="term" value="C:nucleus"/>
    <property type="evidence" value="ECO:0000250"/>
    <property type="project" value="UniProtKB"/>
</dbReference>
<dbReference type="GO" id="GO:0004333">
    <property type="term" value="F:fumarate hydratase activity"/>
    <property type="evidence" value="ECO:0000318"/>
    <property type="project" value="GO_Central"/>
</dbReference>
<dbReference type="GO" id="GO:0006974">
    <property type="term" value="P:DNA damage response"/>
    <property type="evidence" value="ECO:0000250"/>
    <property type="project" value="UniProtKB"/>
</dbReference>
<dbReference type="GO" id="GO:0006302">
    <property type="term" value="P:double-strand break repair"/>
    <property type="evidence" value="ECO:0000250"/>
    <property type="project" value="UniProtKB"/>
</dbReference>
<dbReference type="GO" id="GO:0006106">
    <property type="term" value="P:fumarate metabolic process"/>
    <property type="evidence" value="ECO:0000318"/>
    <property type="project" value="GO_Central"/>
</dbReference>
<dbReference type="GO" id="GO:0006108">
    <property type="term" value="P:malate metabolic process"/>
    <property type="evidence" value="ECO:0000318"/>
    <property type="project" value="GO_Central"/>
</dbReference>
<dbReference type="GO" id="GO:0006099">
    <property type="term" value="P:tricarboxylic acid cycle"/>
    <property type="evidence" value="ECO:0000269"/>
    <property type="project" value="PomBase"/>
</dbReference>
<dbReference type="CDD" id="cd01362">
    <property type="entry name" value="Fumarase_classII"/>
    <property type="match status" value="1"/>
</dbReference>
<dbReference type="FunFam" id="1.10.40.30:FF:000002">
    <property type="entry name" value="Fumarate hydratase class II"/>
    <property type="match status" value="1"/>
</dbReference>
<dbReference type="FunFam" id="1.10.275.10:FF:000001">
    <property type="entry name" value="Fumarate hydratase, mitochondrial"/>
    <property type="match status" value="1"/>
</dbReference>
<dbReference type="FunFam" id="1.20.200.10:FF:000001">
    <property type="entry name" value="Fumarate hydratase, mitochondrial"/>
    <property type="match status" value="1"/>
</dbReference>
<dbReference type="Gene3D" id="1.10.40.30">
    <property type="entry name" value="Fumarase/aspartase (C-terminal domain)"/>
    <property type="match status" value="1"/>
</dbReference>
<dbReference type="Gene3D" id="1.20.200.10">
    <property type="entry name" value="Fumarase/aspartase (Central domain)"/>
    <property type="match status" value="1"/>
</dbReference>
<dbReference type="Gene3D" id="1.10.275.10">
    <property type="entry name" value="Fumarase/aspartase (N-terminal domain)"/>
    <property type="match status" value="1"/>
</dbReference>
<dbReference type="HAMAP" id="MF_00743">
    <property type="entry name" value="FumaraseC"/>
    <property type="match status" value="1"/>
</dbReference>
<dbReference type="InterPro" id="IPR005677">
    <property type="entry name" value="Fum_hydII"/>
</dbReference>
<dbReference type="InterPro" id="IPR024083">
    <property type="entry name" value="Fumarase/histidase_N"/>
</dbReference>
<dbReference type="InterPro" id="IPR018951">
    <property type="entry name" value="Fumarase_C_C"/>
</dbReference>
<dbReference type="InterPro" id="IPR020557">
    <property type="entry name" value="Fumarate_lyase_CS"/>
</dbReference>
<dbReference type="InterPro" id="IPR000362">
    <property type="entry name" value="Fumarate_lyase_fam"/>
</dbReference>
<dbReference type="InterPro" id="IPR022761">
    <property type="entry name" value="Fumarate_lyase_N"/>
</dbReference>
<dbReference type="InterPro" id="IPR008948">
    <property type="entry name" value="L-Aspartase-like"/>
</dbReference>
<dbReference type="NCBIfam" id="TIGR00979">
    <property type="entry name" value="fumC_II"/>
    <property type="match status" value="1"/>
</dbReference>
<dbReference type="NCBIfam" id="NF008909">
    <property type="entry name" value="PRK12273.1"/>
    <property type="match status" value="1"/>
</dbReference>
<dbReference type="PANTHER" id="PTHR11444">
    <property type="entry name" value="ASPARTATEAMMONIA/ARGININOSUCCINATE/ADENYLOSUCCINATE LYASE"/>
    <property type="match status" value="1"/>
</dbReference>
<dbReference type="PANTHER" id="PTHR11444:SF1">
    <property type="entry name" value="FUMARATE HYDRATASE, MITOCHONDRIAL"/>
    <property type="match status" value="1"/>
</dbReference>
<dbReference type="Pfam" id="PF10415">
    <property type="entry name" value="FumaraseC_C"/>
    <property type="match status" value="1"/>
</dbReference>
<dbReference type="Pfam" id="PF00206">
    <property type="entry name" value="Lyase_1"/>
    <property type="match status" value="1"/>
</dbReference>
<dbReference type="PRINTS" id="PR00149">
    <property type="entry name" value="FUMRATELYASE"/>
</dbReference>
<dbReference type="SUPFAM" id="SSF48557">
    <property type="entry name" value="L-aspartase-like"/>
    <property type="match status" value="1"/>
</dbReference>
<dbReference type="PROSITE" id="PS00163">
    <property type="entry name" value="FUMARATE_LYASES"/>
    <property type="match status" value="1"/>
</dbReference>
<proteinExistence type="inferred from homology"/>
<evidence type="ECO:0000250" key="1"/>
<evidence type="ECO:0000250" key="2">
    <source>
        <dbReference type="UniProtKB" id="P05042"/>
    </source>
</evidence>
<evidence type="ECO:0000250" key="3">
    <source>
        <dbReference type="UniProtKB" id="P08417"/>
    </source>
</evidence>
<evidence type="ECO:0000250" key="4">
    <source>
        <dbReference type="UniProtKB" id="P9WN93"/>
    </source>
</evidence>
<evidence type="ECO:0000255" key="5"/>
<evidence type="ECO:0000305" key="6"/>
<feature type="transit peptide" description="Mitochondrion" evidence="5">
    <location>
        <begin position="1"/>
        <end position="39"/>
    </location>
</feature>
<feature type="chain" id="PRO_0000010332" description="Fumarate hydratase, mitochondrial">
    <location>
        <begin position="40"/>
        <end position="520"/>
    </location>
</feature>
<feature type="active site" description="Proton donor/acceptor" evidence="2">
    <location>
        <position position="243"/>
    </location>
</feature>
<feature type="active site" evidence="4">
    <location>
        <position position="373"/>
    </location>
</feature>
<feature type="binding site" evidence="2">
    <location>
        <begin position="153"/>
        <end position="155"/>
    </location>
    <ligand>
        <name>substrate</name>
    </ligand>
</feature>
<feature type="binding site" description="in site B" evidence="2">
    <location>
        <begin position="184"/>
        <end position="187"/>
    </location>
    <ligand>
        <name>substrate</name>
    </ligand>
</feature>
<feature type="binding site" evidence="2">
    <location>
        <begin position="194"/>
        <end position="196"/>
    </location>
    <ligand>
        <name>substrate</name>
    </ligand>
</feature>
<feature type="binding site" evidence="4">
    <location>
        <position position="242"/>
    </location>
    <ligand>
        <name>substrate</name>
    </ligand>
</feature>
<feature type="binding site" evidence="4">
    <location>
        <position position="374"/>
    </location>
    <ligand>
        <name>substrate</name>
    </ligand>
</feature>
<feature type="binding site" evidence="4">
    <location>
        <begin position="379"/>
        <end position="381"/>
    </location>
    <ligand>
        <name>substrate</name>
    </ligand>
</feature>
<feature type="site" description="Important for catalytic activity" evidence="2">
    <location>
        <position position="386"/>
    </location>
</feature>
<accession>O94552</accession>
<accession>O74868</accession>